<accession>O31578</accession>
<accession>Q79EV8</accession>
<reference key="1">
    <citation type="journal article" date="1996" name="DNA Res.">
        <title>Cloning and sequencing of a 27.8-kb nucleotide sequence of the 79 degrees-81 degrees region of the Bacillus subtilis genome containing the sspE locus.</title>
        <authorList>
            <person name="Yamamoto H."/>
            <person name="Uchiyama S."/>
            <person name="Sekiguchi J."/>
        </authorList>
    </citation>
    <scope>NUCLEOTIDE SEQUENCE [GENOMIC DNA]</scope>
</reference>
<reference key="2">
    <citation type="journal article" date="1997" name="Nature">
        <title>The complete genome sequence of the Gram-positive bacterium Bacillus subtilis.</title>
        <authorList>
            <person name="Kunst F."/>
            <person name="Ogasawara N."/>
            <person name="Moszer I."/>
            <person name="Albertini A.M."/>
            <person name="Alloni G."/>
            <person name="Azevedo V."/>
            <person name="Bertero M.G."/>
            <person name="Bessieres P."/>
            <person name="Bolotin A."/>
            <person name="Borchert S."/>
            <person name="Borriss R."/>
            <person name="Boursier L."/>
            <person name="Brans A."/>
            <person name="Braun M."/>
            <person name="Brignell S.C."/>
            <person name="Bron S."/>
            <person name="Brouillet S."/>
            <person name="Bruschi C.V."/>
            <person name="Caldwell B."/>
            <person name="Capuano V."/>
            <person name="Carter N.M."/>
            <person name="Choi S.-K."/>
            <person name="Codani J.-J."/>
            <person name="Connerton I.F."/>
            <person name="Cummings N.J."/>
            <person name="Daniel R.A."/>
            <person name="Denizot F."/>
            <person name="Devine K.M."/>
            <person name="Duesterhoeft A."/>
            <person name="Ehrlich S.D."/>
            <person name="Emmerson P.T."/>
            <person name="Entian K.-D."/>
            <person name="Errington J."/>
            <person name="Fabret C."/>
            <person name="Ferrari E."/>
            <person name="Foulger D."/>
            <person name="Fritz C."/>
            <person name="Fujita M."/>
            <person name="Fujita Y."/>
            <person name="Fuma S."/>
            <person name="Galizzi A."/>
            <person name="Galleron N."/>
            <person name="Ghim S.-Y."/>
            <person name="Glaser P."/>
            <person name="Goffeau A."/>
            <person name="Golightly E.J."/>
            <person name="Grandi G."/>
            <person name="Guiseppi G."/>
            <person name="Guy B.J."/>
            <person name="Haga K."/>
            <person name="Haiech J."/>
            <person name="Harwood C.R."/>
            <person name="Henaut A."/>
            <person name="Hilbert H."/>
            <person name="Holsappel S."/>
            <person name="Hosono S."/>
            <person name="Hullo M.-F."/>
            <person name="Itaya M."/>
            <person name="Jones L.-M."/>
            <person name="Joris B."/>
            <person name="Karamata D."/>
            <person name="Kasahara Y."/>
            <person name="Klaerr-Blanchard M."/>
            <person name="Klein C."/>
            <person name="Kobayashi Y."/>
            <person name="Koetter P."/>
            <person name="Koningstein G."/>
            <person name="Krogh S."/>
            <person name="Kumano M."/>
            <person name="Kurita K."/>
            <person name="Lapidus A."/>
            <person name="Lardinois S."/>
            <person name="Lauber J."/>
            <person name="Lazarevic V."/>
            <person name="Lee S.-M."/>
            <person name="Levine A."/>
            <person name="Liu H."/>
            <person name="Masuda S."/>
            <person name="Mauel C."/>
            <person name="Medigue C."/>
            <person name="Medina N."/>
            <person name="Mellado R.P."/>
            <person name="Mizuno M."/>
            <person name="Moestl D."/>
            <person name="Nakai S."/>
            <person name="Noback M."/>
            <person name="Noone D."/>
            <person name="O'Reilly M."/>
            <person name="Ogawa K."/>
            <person name="Ogiwara A."/>
            <person name="Oudega B."/>
            <person name="Park S.-H."/>
            <person name="Parro V."/>
            <person name="Pohl T.M."/>
            <person name="Portetelle D."/>
            <person name="Porwollik S."/>
            <person name="Prescott A.M."/>
            <person name="Presecan E."/>
            <person name="Pujic P."/>
            <person name="Purnelle B."/>
            <person name="Rapoport G."/>
            <person name="Rey M."/>
            <person name="Reynolds S."/>
            <person name="Rieger M."/>
            <person name="Rivolta C."/>
            <person name="Rocha E."/>
            <person name="Roche B."/>
            <person name="Rose M."/>
            <person name="Sadaie Y."/>
            <person name="Sato T."/>
            <person name="Scanlan E."/>
            <person name="Schleich S."/>
            <person name="Schroeter R."/>
            <person name="Scoffone F."/>
            <person name="Sekiguchi J."/>
            <person name="Sekowska A."/>
            <person name="Seror S.J."/>
            <person name="Serror P."/>
            <person name="Shin B.-S."/>
            <person name="Soldo B."/>
            <person name="Sorokin A."/>
            <person name="Tacconi E."/>
            <person name="Takagi T."/>
            <person name="Takahashi H."/>
            <person name="Takemaru K."/>
            <person name="Takeuchi M."/>
            <person name="Tamakoshi A."/>
            <person name="Tanaka T."/>
            <person name="Terpstra P."/>
            <person name="Tognoni A."/>
            <person name="Tosato V."/>
            <person name="Uchiyama S."/>
            <person name="Vandenbol M."/>
            <person name="Vannier F."/>
            <person name="Vassarotti A."/>
            <person name="Viari A."/>
            <person name="Wambutt R."/>
            <person name="Wedler E."/>
            <person name="Wedler H."/>
            <person name="Weitzenegger T."/>
            <person name="Winters P."/>
            <person name="Wipat A."/>
            <person name="Yamamoto H."/>
            <person name="Yamane K."/>
            <person name="Yasumoto K."/>
            <person name="Yata K."/>
            <person name="Yoshida K."/>
            <person name="Yoshikawa H.-F."/>
            <person name="Zumstein E."/>
            <person name="Yoshikawa H."/>
            <person name="Danchin A."/>
        </authorList>
    </citation>
    <scope>NUCLEOTIDE SEQUENCE [LARGE SCALE GENOMIC DNA]</scope>
    <source>
        <strain>168</strain>
    </source>
</reference>
<name>YFHJ_BACSU</name>
<proteinExistence type="predicted"/>
<keyword id="KW-1185">Reference proteome</keyword>
<organism>
    <name type="scientific">Bacillus subtilis (strain 168)</name>
    <dbReference type="NCBI Taxonomy" id="224308"/>
    <lineage>
        <taxon>Bacteria</taxon>
        <taxon>Bacillati</taxon>
        <taxon>Bacillota</taxon>
        <taxon>Bacilli</taxon>
        <taxon>Bacillales</taxon>
        <taxon>Bacillaceae</taxon>
        <taxon>Bacillus</taxon>
    </lineage>
</organism>
<protein>
    <recommendedName>
        <fullName>Uncharacterized protein YfhJ</fullName>
    </recommendedName>
</protein>
<gene>
    <name type="primary">yfhJ</name>
    <name type="ordered locus">BSU08560</name>
</gene>
<sequence length="89" mass="10503">MNMYIEKLTNLLLEKNEMISYIQAKTWVELLWSDFEATYAKAGHAYQGEKMTEKIVTQWIENYGGQLHLFQSSRNDVNDYLNQSRGLLH</sequence>
<dbReference type="EMBL" id="D85082">
    <property type="protein sequence ID" value="BAA24476.1"/>
    <property type="molecule type" value="Genomic_DNA"/>
</dbReference>
<dbReference type="EMBL" id="AL009126">
    <property type="protein sequence ID" value="CAB12684.1"/>
    <property type="molecule type" value="Genomic_DNA"/>
</dbReference>
<dbReference type="PIR" id="C69801">
    <property type="entry name" value="C69801"/>
</dbReference>
<dbReference type="RefSeq" id="NP_388736.1">
    <property type="nucleotide sequence ID" value="NC_000964.3"/>
</dbReference>
<dbReference type="RefSeq" id="WP_003243789.1">
    <property type="nucleotide sequence ID" value="NZ_OZ025638.1"/>
</dbReference>
<dbReference type="SMR" id="O31578"/>
<dbReference type="FunCoup" id="O31578">
    <property type="interactions" value="164"/>
</dbReference>
<dbReference type="STRING" id="224308.BSU08560"/>
<dbReference type="PaxDb" id="224308-BSU08560"/>
<dbReference type="DNASU" id="936188"/>
<dbReference type="EnsemblBacteria" id="CAB12684">
    <property type="protein sequence ID" value="CAB12684"/>
    <property type="gene ID" value="BSU_08560"/>
</dbReference>
<dbReference type="GeneID" id="936188"/>
<dbReference type="KEGG" id="bsu:BSU08560"/>
<dbReference type="PATRIC" id="fig|224308.179.peg.924"/>
<dbReference type="eggNOG" id="ENOG50330II">
    <property type="taxonomic scope" value="Bacteria"/>
</dbReference>
<dbReference type="InParanoid" id="O31578"/>
<dbReference type="OrthoDB" id="2361637at2"/>
<dbReference type="BioCyc" id="BSUB:BSU08560-MONOMER"/>
<dbReference type="Proteomes" id="UP000001570">
    <property type="component" value="Chromosome"/>
</dbReference>
<dbReference type="InterPro" id="IPR026952">
    <property type="entry name" value="WVELL"/>
</dbReference>
<dbReference type="Pfam" id="PF14043">
    <property type="entry name" value="WVELL"/>
    <property type="match status" value="1"/>
</dbReference>
<feature type="chain" id="PRO_0000360533" description="Uncharacterized protein YfhJ">
    <location>
        <begin position="1"/>
        <end position="89"/>
    </location>
</feature>